<comment type="function">
    <text evidence="2">Component of the ubiquinol-cytochrome c reductase complex (complex III or cytochrome b-c1 complex) that is part of the mitochondrial respiratory chain. The b-c1 complex mediates electron transfer from ubiquinol to cytochrome c. Contributes to the generation of a proton gradient across the mitochondrial membrane that is then used for ATP synthesis.</text>
</comment>
<comment type="cofactor">
    <cofactor evidence="2">
        <name>heme b</name>
        <dbReference type="ChEBI" id="CHEBI:60344"/>
    </cofactor>
    <text evidence="2">Binds 2 heme b groups non-covalently.</text>
</comment>
<comment type="subunit">
    <text evidence="2">The cytochrome bc1 complex contains 11 subunits: 3 respiratory subunits (MT-CYB, CYC1 and UQCRFS1), 2 core proteins (UQCRC1 and UQCRC2) and 6 low-molecular weight proteins (UQCRH/QCR6, UQCRB/QCR7, UQCRQ/QCR8, UQCR10/QCR9, UQCR11/QCR10 and a cleavage product of UQCRFS1). This cytochrome bc1 complex then forms a dimer.</text>
</comment>
<comment type="subcellular location">
    <subcellularLocation>
        <location evidence="2">Mitochondrion inner membrane</location>
        <topology evidence="2">Multi-pass membrane protein</topology>
    </subcellularLocation>
</comment>
<comment type="miscellaneous">
    <text evidence="1">Heme 1 (or BL or b562) is low-potential and absorbs at about 562 nm, and heme 2 (or BH or b566) is high-potential and absorbs at about 566 nm.</text>
</comment>
<comment type="similarity">
    <text evidence="3 4">Belongs to the cytochrome b family.</text>
</comment>
<comment type="caution">
    <text evidence="2">The full-length protein contains only eight transmembrane helices, not nine as predicted by bioinformatics tools.</text>
</comment>
<keyword id="KW-0249">Electron transport</keyword>
<keyword id="KW-0349">Heme</keyword>
<keyword id="KW-0408">Iron</keyword>
<keyword id="KW-0472">Membrane</keyword>
<keyword id="KW-0479">Metal-binding</keyword>
<keyword id="KW-0496">Mitochondrion</keyword>
<keyword id="KW-0999">Mitochondrion inner membrane</keyword>
<keyword id="KW-0679">Respiratory chain</keyword>
<keyword id="KW-0812">Transmembrane</keyword>
<keyword id="KW-1133">Transmembrane helix</keyword>
<keyword id="KW-0813">Transport</keyword>
<keyword id="KW-0830">Ubiquinone</keyword>
<name>CYB_DELSU</name>
<feature type="chain" id="PRO_0000060877" description="Cytochrome b">
    <location>
        <begin position="1"/>
        <end position="380"/>
    </location>
</feature>
<feature type="transmembrane region" description="Helical" evidence="2">
    <location>
        <begin position="33"/>
        <end position="53"/>
    </location>
</feature>
<feature type="transmembrane region" description="Helical" evidence="2">
    <location>
        <begin position="77"/>
        <end position="98"/>
    </location>
</feature>
<feature type="transmembrane region" description="Helical" evidence="2">
    <location>
        <begin position="113"/>
        <end position="133"/>
    </location>
</feature>
<feature type="transmembrane region" description="Helical" evidence="2">
    <location>
        <begin position="178"/>
        <end position="198"/>
    </location>
</feature>
<feature type="transmembrane region" description="Helical" evidence="2">
    <location>
        <begin position="226"/>
        <end position="246"/>
    </location>
</feature>
<feature type="transmembrane region" description="Helical" evidence="2">
    <location>
        <begin position="288"/>
        <end position="308"/>
    </location>
</feature>
<feature type="transmembrane region" description="Helical" evidence="2">
    <location>
        <begin position="320"/>
        <end position="340"/>
    </location>
</feature>
<feature type="transmembrane region" description="Helical" evidence="2">
    <location>
        <begin position="347"/>
        <end position="367"/>
    </location>
</feature>
<feature type="binding site" description="axial binding residue" evidence="2">
    <location>
        <position position="83"/>
    </location>
    <ligand>
        <name>heme b</name>
        <dbReference type="ChEBI" id="CHEBI:60344"/>
        <label>b562</label>
    </ligand>
    <ligandPart>
        <name>Fe</name>
        <dbReference type="ChEBI" id="CHEBI:18248"/>
    </ligandPart>
</feature>
<feature type="binding site" description="axial binding residue" evidence="2">
    <location>
        <position position="97"/>
    </location>
    <ligand>
        <name>heme b</name>
        <dbReference type="ChEBI" id="CHEBI:60344"/>
        <label>b566</label>
    </ligand>
    <ligandPart>
        <name>Fe</name>
        <dbReference type="ChEBI" id="CHEBI:18248"/>
    </ligandPart>
</feature>
<feature type="binding site" description="axial binding residue" evidence="2">
    <location>
        <position position="182"/>
    </location>
    <ligand>
        <name>heme b</name>
        <dbReference type="ChEBI" id="CHEBI:60344"/>
        <label>b562</label>
    </ligand>
    <ligandPart>
        <name>Fe</name>
        <dbReference type="ChEBI" id="CHEBI:18248"/>
    </ligandPart>
</feature>
<feature type="binding site" description="axial binding residue" evidence="2">
    <location>
        <position position="196"/>
    </location>
    <ligand>
        <name>heme b</name>
        <dbReference type="ChEBI" id="CHEBI:60344"/>
        <label>b566</label>
    </ligand>
    <ligandPart>
        <name>Fe</name>
        <dbReference type="ChEBI" id="CHEBI:18248"/>
    </ligandPart>
</feature>
<feature type="binding site" evidence="2">
    <location>
        <position position="201"/>
    </location>
    <ligand>
        <name>a ubiquinone</name>
        <dbReference type="ChEBI" id="CHEBI:16389"/>
    </ligand>
</feature>
<dbReference type="EMBL" id="AF108687">
    <property type="protein sequence ID" value="AAD45469.1"/>
    <property type="molecule type" value="Genomic_DNA"/>
</dbReference>
<dbReference type="GO" id="GO:0005743">
    <property type="term" value="C:mitochondrial inner membrane"/>
    <property type="evidence" value="ECO:0007669"/>
    <property type="project" value="UniProtKB-SubCell"/>
</dbReference>
<dbReference type="GO" id="GO:0045275">
    <property type="term" value="C:respiratory chain complex III"/>
    <property type="evidence" value="ECO:0007669"/>
    <property type="project" value="InterPro"/>
</dbReference>
<dbReference type="GO" id="GO:0046872">
    <property type="term" value="F:metal ion binding"/>
    <property type="evidence" value="ECO:0007669"/>
    <property type="project" value="UniProtKB-KW"/>
</dbReference>
<dbReference type="GO" id="GO:0008121">
    <property type="term" value="F:ubiquinol-cytochrome-c reductase activity"/>
    <property type="evidence" value="ECO:0007669"/>
    <property type="project" value="InterPro"/>
</dbReference>
<dbReference type="GO" id="GO:0006122">
    <property type="term" value="P:mitochondrial electron transport, ubiquinol to cytochrome c"/>
    <property type="evidence" value="ECO:0007669"/>
    <property type="project" value="TreeGrafter"/>
</dbReference>
<dbReference type="CDD" id="cd00290">
    <property type="entry name" value="cytochrome_b_C"/>
    <property type="match status" value="1"/>
</dbReference>
<dbReference type="CDD" id="cd00284">
    <property type="entry name" value="Cytochrome_b_N"/>
    <property type="match status" value="1"/>
</dbReference>
<dbReference type="FunFam" id="1.20.810.10:FF:000002">
    <property type="entry name" value="Cytochrome b"/>
    <property type="match status" value="1"/>
</dbReference>
<dbReference type="Gene3D" id="1.20.810.10">
    <property type="entry name" value="Cytochrome Bc1 Complex, Chain C"/>
    <property type="match status" value="1"/>
</dbReference>
<dbReference type="InterPro" id="IPR005798">
    <property type="entry name" value="Cyt_b/b6_C"/>
</dbReference>
<dbReference type="InterPro" id="IPR036150">
    <property type="entry name" value="Cyt_b/b6_C_sf"/>
</dbReference>
<dbReference type="InterPro" id="IPR005797">
    <property type="entry name" value="Cyt_b/b6_N"/>
</dbReference>
<dbReference type="InterPro" id="IPR027387">
    <property type="entry name" value="Cytb/b6-like_sf"/>
</dbReference>
<dbReference type="InterPro" id="IPR030689">
    <property type="entry name" value="Cytochrome_b"/>
</dbReference>
<dbReference type="InterPro" id="IPR048260">
    <property type="entry name" value="Cytochrome_b_C_euk/bac"/>
</dbReference>
<dbReference type="InterPro" id="IPR048259">
    <property type="entry name" value="Cytochrome_b_N_euk/bac"/>
</dbReference>
<dbReference type="InterPro" id="IPR016174">
    <property type="entry name" value="Di-haem_cyt_TM"/>
</dbReference>
<dbReference type="PANTHER" id="PTHR19271">
    <property type="entry name" value="CYTOCHROME B"/>
    <property type="match status" value="1"/>
</dbReference>
<dbReference type="PANTHER" id="PTHR19271:SF16">
    <property type="entry name" value="CYTOCHROME B"/>
    <property type="match status" value="1"/>
</dbReference>
<dbReference type="Pfam" id="PF00032">
    <property type="entry name" value="Cytochrom_B_C"/>
    <property type="match status" value="1"/>
</dbReference>
<dbReference type="Pfam" id="PF00033">
    <property type="entry name" value="Cytochrome_B"/>
    <property type="match status" value="1"/>
</dbReference>
<dbReference type="PIRSF" id="PIRSF038885">
    <property type="entry name" value="COB"/>
    <property type="match status" value="1"/>
</dbReference>
<dbReference type="SUPFAM" id="SSF81648">
    <property type="entry name" value="a domain/subunit of cytochrome bc1 complex (Ubiquinol-cytochrome c reductase)"/>
    <property type="match status" value="1"/>
</dbReference>
<dbReference type="SUPFAM" id="SSF81342">
    <property type="entry name" value="Transmembrane di-heme cytochromes"/>
    <property type="match status" value="1"/>
</dbReference>
<dbReference type="PROSITE" id="PS51003">
    <property type="entry name" value="CYTB_CTER"/>
    <property type="match status" value="1"/>
</dbReference>
<dbReference type="PROSITE" id="PS51002">
    <property type="entry name" value="CYTB_NTER"/>
    <property type="match status" value="1"/>
</dbReference>
<protein>
    <recommendedName>
        <fullName>Cytochrome b</fullName>
    </recommendedName>
    <alternativeName>
        <fullName>Complex III subunit 3</fullName>
    </alternativeName>
    <alternativeName>
        <fullName>Complex III subunit III</fullName>
    </alternativeName>
    <alternativeName>
        <fullName>Cytochrome b-c1 complex subunit 3</fullName>
    </alternativeName>
    <alternativeName>
        <fullName>Ubiquinol-cytochrome-c reductase complex cytochrome b subunit</fullName>
    </alternativeName>
</protein>
<accession>Q9XNV7</accession>
<reference key="1">
    <citation type="journal article" date="1999" name="J. Mammal. Evol.">
        <title>Phylogenetic relationships and the radiation of sigmodontine rodents in South America: evidence from cytochrome b.</title>
        <authorList>
            <person name="Smith M.F."/>
            <person name="Patton J.L."/>
        </authorList>
    </citation>
    <scope>NUCLEOTIDE SEQUENCE [GENOMIC DNA]</scope>
    <source>
        <strain>Isolate MVZ 183075</strain>
    </source>
</reference>
<sequence length="380" mass="42824">MTIMRKTHPLFKIINHSFIDLPTPSNISSWWNFGSLLGMCLVIQILTGLFLAMHYTSDTATAFSSVAHICRDVNYGWLIRYLHANGASMFFICLFIHVGRGIYYGSYVLTETWNIGIVLFLTTMATAFVGYVLPWGQMSFWGATVITNLLSAIPYIGTTLVXWIWGGFSVDKATLTRFFAFHFILPFIIAAFVLVHLLFLHETGSNNPSGLNSNSDKIPFHPYYTIKDFLGVLLLLMVLMILALFFPDVLGDPDNYTPANPLNTPAHIKPEWYFLFAYAILRSIPNKLGGVLALILSILILAAFPLLNSSKQHGMTYRPITQILYWIFVANLLILTWIGXQPVEYPFTAIGQISSILYFTIIVILMPIASMIENXILKLH</sequence>
<geneLocation type="mitochondrion"/>
<proteinExistence type="inferred from homology"/>
<gene>
    <name type="primary">MT-CYB</name>
    <name type="synonym">COB</name>
    <name type="synonym">CYTB</name>
    <name type="synonym">MTCYB</name>
</gene>
<evidence type="ECO:0000250" key="1"/>
<evidence type="ECO:0000250" key="2">
    <source>
        <dbReference type="UniProtKB" id="P00157"/>
    </source>
</evidence>
<evidence type="ECO:0000255" key="3">
    <source>
        <dbReference type="PROSITE-ProRule" id="PRU00967"/>
    </source>
</evidence>
<evidence type="ECO:0000255" key="4">
    <source>
        <dbReference type="PROSITE-ProRule" id="PRU00968"/>
    </source>
</evidence>
<organism>
    <name type="scientific">Delomys sublineatus</name>
    <name type="common">Pallid Atlantic forest rat</name>
    <dbReference type="NCBI Taxonomy" id="89131"/>
    <lineage>
        <taxon>Eukaryota</taxon>
        <taxon>Metazoa</taxon>
        <taxon>Chordata</taxon>
        <taxon>Craniata</taxon>
        <taxon>Vertebrata</taxon>
        <taxon>Euteleostomi</taxon>
        <taxon>Mammalia</taxon>
        <taxon>Eutheria</taxon>
        <taxon>Euarchontoglires</taxon>
        <taxon>Glires</taxon>
        <taxon>Rodentia</taxon>
        <taxon>Myomorpha</taxon>
        <taxon>Muroidea</taxon>
        <taxon>Cricetidae</taxon>
        <taxon>Sigmodontinae</taxon>
        <taxon>Delomys</taxon>
    </lineage>
</organism>